<evidence type="ECO:0000250" key="1"/>
<evidence type="ECO:0000255" key="2">
    <source>
        <dbReference type="HAMAP-Rule" id="MF_00403"/>
    </source>
</evidence>
<evidence type="ECO:0000256" key="3">
    <source>
        <dbReference type="SAM" id="MobiDB-lite"/>
    </source>
</evidence>
<evidence type="ECO:0000305" key="4"/>
<accession>A5IHR9</accession>
<dbReference type="EMBL" id="CP000675">
    <property type="protein sequence ID" value="ABQ56919.1"/>
    <property type="molecule type" value="Genomic_DNA"/>
</dbReference>
<dbReference type="RefSeq" id="WP_004450478.1">
    <property type="nucleotide sequence ID" value="NZ_JAPMSS010000006.1"/>
</dbReference>
<dbReference type="SMR" id="A5IHR9"/>
<dbReference type="GeneID" id="57034327"/>
<dbReference type="KEGG" id="lpc:LPC_3019"/>
<dbReference type="HOGENOM" id="CLU_104295_1_2_6"/>
<dbReference type="GO" id="GO:0015935">
    <property type="term" value="C:small ribosomal subunit"/>
    <property type="evidence" value="ECO:0007669"/>
    <property type="project" value="InterPro"/>
</dbReference>
<dbReference type="GO" id="GO:0019843">
    <property type="term" value="F:rRNA binding"/>
    <property type="evidence" value="ECO:0007669"/>
    <property type="project" value="UniProtKB-UniRule"/>
</dbReference>
<dbReference type="GO" id="GO:0003735">
    <property type="term" value="F:structural constituent of ribosome"/>
    <property type="evidence" value="ECO:0007669"/>
    <property type="project" value="InterPro"/>
</dbReference>
<dbReference type="GO" id="GO:0000049">
    <property type="term" value="F:tRNA binding"/>
    <property type="evidence" value="ECO:0007669"/>
    <property type="project" value="UniProtKB-UniRule"/>
</dbReference>
<dbReference type="GO" id="GO:0006412">
    <property type="term" value="P:translation"/>
    <property type="evidence" value="ECO:0007669"/>
    <property type="project" value="UniProtKB-UniRule"/>
</dbReference>
<dbReference type="CDD" id="cd03368">
    <property type="entry name" value="Ribosomal_S12"/>
    <property type="match status" value="1"/>
</dbReference>
<dbReference type="FunFam" id="2.40.50.140:FF:000001">
    <property type="entry name" value="30S ribosomal protein S12"/>
    <property type="match status" value="1"/>
</dbReference>
<dbReference type="Gene3D" id="2.40.50.140">
    <property type="entry name" value="Nucleic acid-binding proteins"/>
    <property type="match status" value="1"/>
</dbReference>
<dbReference type="HAMAP" id="MF_00403_B">
    <property type="entry name" value="Ribosomal_uS12_B"/>
    <property type="match status" value="1"/>
</dbReference>
<dbReference type="InterPro" id="IPR012340">
    <property type="entry name" value="NA-bd_OB-fold"/>
</dbReference>
<dbReference type="InterPro" id="IPR006032">
    <property type="entry name" value="Ribosomal_uS12"/>
</dbReference>
<dbReference type="InterPro" id="IPR005679">
    <property type="entry name" value="Ribosomal_uS12_bac"/>
</dbReference>
<dbReference type="NCBIfam" id="TIGR00981">
    <property type="entry name" value="rpsL_bact"/>
    <property type="match status" value="1"/>
</dbReference>
<dbReference type="PANTHER" id="PTHR11652">
    <property type="entry name" value="30S RIBOSOMAL PROTEIN S12 FAMILY MEMBER"/>
    <property type="match status" value="1"/>
</dbReference>
<dbReference type="Pfam" id="PF00164">
    <property type="entry name" value="Ribosom_S12_S23"/>
    <property type="match status" value="1"/>
</dbReference>
<dbReference type="PIRSF" id="PIRSF002133">
    <property type="entry name" value="Ribosomal_S12/S23"/>
    <property type="match status" value="1"/>
</dbReference>
<dbReference type="PRINTS" id="PR01034">
    <property type="entry name" value="RIBOSOMALS12"/>
</dbReference>
<dbReference type="SUPFAM" id="SSF50249">
    <property type="entry name" value="Nucleic acid-binding proteins"/>
    <property type="match status" value="1"/>
</dbReference>
<dbReference type="PROSITE" id="PS00055">
    <property type="entry name" value="RIBOSOMAL_S12"/>
    <property type="match status" value="1"/>
</dbReference>
<reference key="1">
    <citation type="submission" date="2006-11" db="EMBL/GenBank/DDBJ databases">
        <title>Identification and characterization of a new conjugation/ type IVA secretion system (trb/tra) of L. pneumophila Corby localized on a mobile genomic island.</title>
        <authorList>
            <person name="Gloeckner G."/>
            <person name="Albert-Weissenberger C."/>
            <person name="Weinmann E."/>
            <person name="Jacobi S."/>
            <person name="Schunder E."/>
            <person name="Steinert M."/>
            <person name="Buchrieser C."/>
            <person name="Hacker J."/>
            <person name="Heuner K."/>
        </authorList>
    </citation>
    <scope>NUCLEOTIDE SEQUENCE [LARGE SCALE GENOMIC DNA]</scope>
    <source>
        <strain>Corby</strain>
    </source>
</reference>
<feature type="chain" id="PRO_1000049791" description="Small ribosomal subunit protein uS12">
    <location>
        <begin position="1"/>
        <end position="126"/>
    </location>
</feature>
<feature type="region of interest" description="Disordered" evidence="3">
    <location>
        <begin position="99"/>
        <end position="126"/>
    </location>
</feature>
<feature type="compositionally biased region" description="Basic residues" evidence="3">
    <location>
        <begin position="113"/>
        <end position="126"/>
    </location>
</feature>
<feature type="modified residue" description="3-methylthioaspartic acid" evidence="1">
    <location>
        <position position="89"/>
    </location>
</feature>
<keyword id="KW-0488">Methylation</keyword>
<keyword id="KW-0687">Ribonucleoprotein</keyword>
<keyword id="KW-0689">Ribosomal protein</keyword>
<keyword id="KW-0694">RNA-binding</keyword>
<keyword id="KW-0699">rRNA-binding</keyword>
<keyword id="KW-0820">tRNA-binding</keyword>
<protein>
    <recommendedName>
        <fullName evidence="2">Small ribosomal subunit protein uS12</fullName>
    </recommendedName>
    <alternativeName>
        <fullName evidence="4">30S ribosomal protein S12</fullName>
    </alternativeName>
</protein>
<organism>
    <name type="scientific">Legionella pneumophila (strain Corby)</name>
    <dbReference type="NCBI Taxonomy" id="400673"/>
    <lineage>
        <taxon>Bacteria</taxon>
        <taxon>Pseudomonadati</taxon>
        <taxon>Pseudomonadota</taxon>
        <taxon>Gammaproteobacteria</taxon>
        <taxon>Legionellales</taxon>
        <taxon>Legionellaceae</taxon>
        <taxon>Legionella</taxon>
    </lineage>
</organism>
<sequence length="126" mass="14071">MATINQLVRKPRVDVKKKSNVPALESCPQRRGVCTRVYTTTPKKPNSAMRKVARVRLTNGFEVTSYIGGEGHNLQEHSVVLIRGGRVKDLPGVRYHTVRGSLDTSGVNDRKQGRSKYGTKKPKDKK</sequence>
<gene>
    <name evidence="2" type="primary">rpsL</name>
    <name type="ordered locus">LPC_3019</name>
</gene>
<comment type="function">
    <text evidence="2">With S4 and S5 plays an important role in translational accuracy.</text>
</comment>
<comment type="function">
    <text evidence="2">Interacts with and stabilizes bases of the 16S rRNA that are involved in tRNA selection in the A site and with the mRNA backbone. Located at the interface of the 30S and 50S subunits, it traverses the body of the 30S subunit contacting proteins on the other side and probably holding the rRNA structure together. The combined cluster of proteins S8, S12 and S17 appears to hold together the shoulder and platform of the 30S subunit.</text>
</comment>
<comment type="subunit">
    <text evidence="2">Part of the 30S ribosomal subunit. Contacts proteins S8 and S17. May interact with IF1 in the 30S initiation complex.</text>
</comment>
<comment type="similarity">
    <text evidence="2">Belongs to the universal ribosomal protein uS12 family.</text>
</comment>
<name>RS12_LEGPC</name>
<proteinExistence type="inferred from homology"/>